<sequence length="520" mass="58704">MATILIVVLLLASIGVGYGLRAKKHSETLAQARKAAEKIIEHERQKTKAEVAEYEKNSVQETQQYQETIDQELADDLHDNQRKEAWIEQRMNLLNQKKIVLTNRADALAKKRQSLLQERDNVRTTLGEAKQLITDRWNKLQEVADLEEQAASKLVLKETKQDAIRSKDEFVNNAQTELESSCEREAEDLIALAMEHSDVPRGQAENHRSFIAENAEYLGKLIGNSGQNVRAIEALTGVDIVIDDQEKEVILNGYDPVRRAVAMETMEMIKTEKRVVPDTIERLVNKANKVIDQRIRQYGEDAVRELKLKYVAPDLIKFIGRMHYRTSYGQNILEHSIETAKLAGIFAVELGEDATLARRAGLLHDIGKSIDRDIEATHVELGVELTTKYRESPVIVNTIASHHGDVEARYVIANLVEAADAISGARQGARSESVADYIQRIKSLEEIANKHPEVKESYAIQAGRELRVIVQPKETDDKTIHSLATNVKNQIEEDVTYPGQVKVTVVRKLEIVEYVEKKQA</sequence>
<comment type="function">
    <text evidence="1">Endoribonuclease that initiates mRNA decay.</text>
</comment>
<comment type="subcellular location">
    <subcellularLocation>
        <location evidence="1">Cell membrane</location>
        <topology evidence="1">Single-pass membrane protein</topology>
    </subcellularLocation>
</comment>
<comment type="similarity">
    <text evidence="1">Belongs to the RNase Y family.</text>
</comment>
<accession>Q03E93</accession>
<name>RNY2_PEDPA</name>
<proteinExistence type="inferred from homology"/>
<evidence type="ECO:0000255" key="1">
    <source>
        <dbReference type="HAMAP-Rule" id="MF_00335"/>
    </source>
</evidence>
<evidence type="ECO:0000255" key="2">
    <source>
        <dbReference type="PROSITE-ProRule" id="PRU01175"/>
    </source>
</evidence>
<protein>
    <recommendedName>
        <fullName evidence="1">Ribonuclease Y 2</fullName>
        <shortName evidence="1">RNase Y 2</shortName>
        <ecNumber evidence="1">3.1.-.-</ecNumber>
    </recommendedName>
</protein>
<feature type="chain" id="PRO_0000344917" description="Ribonuclease Y 2">
    <location>
        <begin position="1"/>
        <end position="520"/>
    </location>
</feature>
<feature type="transmembrane region" description="Helical" evidence="1">
    <location>
        <begin position="7"/>
        <end position="23"/>
    </location>
</feature>
<feature type="domain" description="KH" evidence="1">
    <location>
        <begin position="206"/>
        <end position="269"/>
    </location>
</feature>
<feature type="domain" description="HD" evidence="2">
    <location>
        <begin position="332"/>
        <end position="425"/>
    </location>
</feature>
<keyword id="KW-1003">Cell membrane</keyword>
<keyword id="KW-0255">Endonuclease</keyword>
<keyword id="KW-0378">Hydrolase</keyword>
<keyword id="KW-0472">Membrane</keyword>
<keyword id="KW-0540">Nuclease</keyword>
<keyword id="KW-0694">RNA-binding</keyword>
<keyword id="KW-0812">Transmembrane</keyword>
<keyword id="KW-1133">Transmembrane helix</keyword>
<reference key="1">
    <citation type="journal article" date="2006" name="Proc. Natl. Acad. Sci. U.S.A.">
        <title>Comparative genomics of the lactic acid bacteria.</title>
        <authorList>
            <person name="Makarova K.S."/>
            <person name="Slesarev A."/>
            <person name="Wolf Y.I."/>
            <person name="Sorokin A."/>
            <person name="Mirkin B."/>
            <person name="Koonin E.V."/>
            <person name="Pavlov A."/>
            <person name="Pavlova N."/>
            <person name="Karamychev V."/>
            <person name="Polouchine N."/>
            <person name="Shakhova V."/>
            <person name="Grigoriev I."/>
            <person name="Lou Y."/>
            <person name="Rohksar D."/>
            <person name="Lucas S."/>
            <person name="Huang K."/>
            <person name="Goodstein D.M."/>
            <person name="Hawkins T."/>
            <person name="Plengvidhya V."/>
            <person name="Welker D."/>
            <person name="Hughes J."/>
            <person name="Goh Y."/>
            <person name="Benson A."/>
            <person name="Baldwin K."/>
            <person name="Lee J.-H."/>
            <person name="Diaz-Muniz I."/>
            <person name="Dosti B."/>
            <person name="Smeianov V."/>
            <person name="Wechter W."/>
            <person name="Barabote R."/>
            <person name="Lorca G."/>
            <person name="Altermann E."/>
            <person name="Barrangou R."/>
            <person name="Ganesan B."/>
            <person name="Xie Y."/>
            <person name="Rawsthorne H."/>
            <person name="Tamir D."/>
            <person name="Parker C."/>
            <person name="Breidt F."/>
            <person name="Broadbent J.R."/>
            <person name="Hutkins R."/>
            <person name="O'Sullivan D."/>
            <person name="Steele J."/>
            <person name="Unlu G."/>
            <person name="Saier M.H. Jr."/>
            <person name="Klaenhammer T."/>
            <person name="Richardson P."/>
            <person name="Kozyavkin S."/>
            <person name="Weimer B.C."/>
            <person name="Mills D.A."/>
        </authorList>
    </citation>
    <scope>NUCLEOTIDE SEQUENCE [LARGE SCALE GENOMIC DNA]</scope>
    <source>
        <strain>ATCC 25745 / CCUG 21536 / LMG 10740 / 183-1w</strain>
    </source>
</reference>
<gene>
    <name evidence="1" type="primary">rny2</name>
    <name type="ordered locus">PEPE_1448</name>
</gene>
<dbReference type="EC" id="3.1.-.-" evidence="1"/>
<dbReference type="EMBL" id="CP000422">
    <property type="protein sequence ID" value="ABJ68479.1"/>
    <property type="molecule type" value="Genomic_DNA"/>
</dbReference>
<dbReference type="RefSeq" id="WP_011673667.1">
    <property type="nucleotide sequence ID" value="NC_008525.1"/>
</dbReference>
<dbReference type="SMR" id="Q03E93"/>
<dbReference type="STRING" id="278197.PEPE_1448"/>
<dbReference type="GeneID" id="33061622"/>
<dbReference type="KEGG" id="ppe:PEPE_1448"/>
<dbReference type="eggNOG" id="COG1418">
    <property type="taxonomic scope" value="Bacteria"/>
</dbReference>
<dbReference type="HOGENOM" id="CLU_028328_1_0_9"/>
<dbReference type="OrthoDB" id="9803205at2"/>
<dbReference type="Proteomes" id="UP000000773">
    <property type="component" value="Chromosome"/>
</dbReference>
<dbReference type="GO" id="GO:0005886">
    <property type="term" value="C:plasma membrane"/>
    <property type="evidence" value="ECO:0007669"/>
    <property type="project" value="UniProtKB-SubCell"/>
</dbReference>
<dbReference type="GO" id="GO:0003723">
    <property type="term" value="F:RNA binding"/>
    <property type="evidence" value="ECO:0007669"/>
    <property type="project" value="UniProtKB-UniRule"/>
</dbReference>
<dbReference type="GO" id="GO:0004521">
    <property type="term" value="F:RNA endonuclease activity"/>
    <property type="evidence" value="ECO:0007669"/>
    <property type="project" value="UniProtKB-UniRule"/>
</dbReference>
<dbReference type="GO" id="GO:0006402">
    <property type="term" value="P:mRNA catabolic process"/>
    <property type="evidence" value="ECO:0007669"/>
    <property type="project" value="UniProtKB-UniRule"/>
</dbReference>
<dbReference type="CDD" id="cd00077">
    <property type="entry name" value="HDc"/>
    <property type="match status" value="1"/>
</dbReference>
<dbReference type="CDD" id="cd22431">
    <property type="entry name" value="KH-I_RNaseY"/>
    <property type="match status" value="1"/>
</dbReference>
<dbReference type="Gene3D" id="3.30.300.20">
    <property type="match status" value="1"/>
</dbReference>
<dbReference type="Gene3D" id="1.10.3210.10">
    <property type="entry name" value="Hypothetical protein af1432"/>
    <property type="match status" value="1"/>
</dbReference>
<dbReference type="HAMAP" id="MF_00335">
    <property type="entry name" value="RNase_Y"/>
    <property type="match status" value="1"/>
</dbReference>
<dbReference type="InterPro" id="IPR003607">
    <property type="entry name" value="HD/PDEase_dom"/>
</dbReference>
<dbReference type="InterPro" id="IPR006674">
    <property type="entry name" value="HD_domain"/>
</dbReference>
<dbReference type="InterPro" id="IPR006675">
    <property type="entry name" value="HDIG_dom"/>
</dbReference>
<dbReference type="InterPro" id="IPR015946">
    <property type="entry name" value="KH_dom-like_a/b"/>
</dbReference>
<dbReference type="InterPro" id="IPR004088">
    <property type="entry name" value="KH_dom_type_1"/>
</dbReference>
<dbReference type="InterPro" id="IPR036612">
    <property type="entry name" value="KH_dom_type_1_sf"/>
</dbReference>
<dbReference type="InterPro" id="IPR017705">
    <property type="entry name" value="Ribonuclease_Y"/>
</dbReference>
<dbReference type="InterPro" id="IPR022711">
    <property type="entry name" value="RNase_Y_N"/>
</dbReference>
<dbReference type="NCBIfam" id="TIGR00277">
    <property type="entry name" value="HDIG"/>
    <property type="match status" value="1"/>
</dbReference>
<dbReference type="NCBIfam" id="TIGR03319">
    <property type="entry name" value="RNase_Y"/>
    <property type="match status" value="1"/>
</dbReference>
<dbReference type="Pfam" id="PF01966">
    <property type="entry name" value="HD"/>
    <property type="match status" value="1"/>
</dbReference>
<dbReference type="Pfam" id="PF00013">
    <property type="entry name" value="KH_1"/>
    <property type="match status" value="1"/>
</dbReference>
<dbReference type="Pfam" id="PF12072">
    <property type="entry name" value="RNase_Y_N"/>
    <property type="match status" value="1"/>
</dbReference>
<dbReference type="SMART" id="SM00471">
    <property type="entry name" value="HDc"/>
    <property type="match status" value="1"/>
</dbReference>
<dbReference type="SUPFAM" id="SSF54791">
    <property type="entry name" value="Eukaryotic type KH-domain (KH-domain type I)"/>
    <property type="match status" value="1"/>
</dbReference>
<dbReference type="SUPFAM" id="SSF109604">
    <property type="entry name" value="HD-domain/PDEase-like"/>
    <property type="match status" value="1"/>
</dbReference>
<dbReference type="PROSITE" id="PS51831">
    <property type="entry name" value="HD"/>
    <property type="match status" value="1"/>
</dbReference>
<dbReference type="PROSITE" id="PS50084">
    <property type="entry name" value="KH_TYPE_1"/>
    <property type="match status" value="1"/>
</dbReference>
<organism>
    <name type="scientific">Pediococcus pentosaceus (strain ATCC 25745 / CCUG 21536 / LMG 10740 / 183-1w)</name>
    <dbReference type="NCBI Taxonomy" id="278197"/>
    <lineage>
        <taxon>Bacteria</taxon>
        <taxon>Bacillati</taxon>
        <taxon>Bacillota</taxon>
        <taxon>Bacilli</taxon>
        <taxon>Lactobacillales</taxon>
        <taxon>Lactobacillaceae</taxon>
        <taxon>Pediococcus</taxon>
    </lineage>
</organism>